<evidence type="ECO:0000255" key="1">
    <source>
        <dbReference type="HAMAP-Rule" id="MF_01185"/>
    </source>
</evidence>
<evidence type="ECO:0000305" key="2"/>
<dbReference type="EMBL" id="AE015927">
    <property type="protein sequence ID" value="AAO36255.1"/>
    <property type="status" value="ALT_INIT"/>
    <property type="molecule type" value="Genomic_DNA"/>
</dbReference>
<dbReference type="RefSeq" id="WP_035109452.1">
    <property type="nucleotide sequence ID" value="NC_004557.1"/>
</dbReference>
<dbReference type="SMR" id="Q893T7"/>
<dbReference type="STRING" id="212717.CTC_01721"/>
<dbReference type="GeneID" id="24254628"/>
<dbReference type="KEGG" id="ctc:CTC_01721"/>
<dbReference type="HOGENOM" id="CLU_112356_0_2_9"/>
<dbReference type="OrthoDB" id="9801235at2"/>
<dbReference type="Proteomes" id="UP000001412">
    <property type="component" value="Chromosome"/>
</dbReference>
<dbReference type="GO" id="GO:0005737">
    <property type="term" value="C:cytoplasm"/>
    <property type="evidence" value="ECO:0007669"/>
    <property type="project" value="UniProtKB-SubCell"/>
</dbReference>
<dbReference type="GO" id="GO:0044780">
    <property type="term" value="P:bacterial-type flagellum assembly"/>
    <property type="evidence" value="ECO:0007669"/>
    <property type="project" value="UniProtKB-UniRule"/>
</dbReference>
<dbReference type="GO" id="GO:0006417">
    <property type="term" value="P:regulation of translation"/>
    <property type="evidence" value="ECO:0007669"/>
    <property type="project" value="UniProtKB-KW"/>
</dbReference>
<dbReference type="Gene3D" id="2.30.290.10">
    <property type="entry name" value="BH3618-like"/>
    <property type="match status" value="1"/>
</dbReference>
<dbReference type="HAMAP" id="MF_01185">
    <property type="entry name" value="FliW"/>
    <property type="match status" value="1"/>
</dbReference>
<dbReference type="InterPro" id="IPR003775">
    <property type="entry name" value="Flagellar_assembly_factor_FliW"/>
</dbReference>
<dbReference type="InterPro" id="IPR024046">
    <property type="entry name" value="Flagellar_assmbl_FliW_dom_sf"/>
</dbReference>
<dbReference type="NCBIfam" id="NF009793">
    <property type="entry name" value="PRK13285.1-1"/>
    <property type="match status" value="1"/>
</dbReference>
<dbReference type="PANTHER" id="PTHR39190">
    <property type="entry name" value="FLAGELLAR ASSEMBLY FACTOR FLIW"/>
    <property type="match status" value="1"/>
</dbReference>
<dbReference type="PANTHER" id="PTHR39190:SF1">
    <property type="entry name" value="FLAGELLAR ASSEMBLY FACTOR FLIW"/>
    <property type="match status" value="1"/>
</dbReference>
<dbReference type="Pfam" id="PF02623">
    <property type="entry name" value="FliW"/>
    <property type="match status" value="1"/>
</dbReference>
<dbReference type="SUPFAM" id="SSF141457">
    <property type="entry name" value="BH3618-like"/>
    <property type="match status" value="1"/>
</dbReference>
<name>FLIW_CLOTE</name>
<feature type="chain" id="PRO_0000272981" description="Flagellar assembly factor FliW">
    <location>
        <begin position="1"/>
        <end position="145"/>
    </location>
</feature>
<protein>
    <recommendedName>
        <fullName evidence="1">Flagellar assembly factor FliW</fullName>
    </recommendedName>
</protein>
<gene>
    <name evidence="1" type="primary">fliW</name>
    <name type="ordered locus">CTC_01721</name>
</gene>
<accession>Q893T7</accession>
<proteinExistence type="inferred from homology"/>
<organism>
    <name type="scientific">Clostridium tetani (strain Massachusetts / E88)</name>
    <dbReference type="NCBI Taxonomy" id="212717"/>
    <lineage>
        <taxon>Bacteria</taxon>
        <taxon>Bacillati</taxon>
        <taxon>Bacillota</taxon>
        <taxon>Clostridia</taxon>
        <taxon>Eubacteriales</taxon>
        <taxon>Clostridiaceae</taxon>
        <taxon>Clostridium</taxon>
    </lineage>
</organism>
<keyword id="KW-1005">Bacterial flagellum biogenesis</keyword>
<keyword id="KW-0143">Chaperone</keyword>
<keyword id="KW-0963">Cytoplasm</keyword>
<keyword id="KW-1185">Reference proteome</keyword>
<keyword id="KW-0810">Translation regulation</keyword>
<comment type="function">
    <text evidence="1">Acts as an anti-CsrA protein, binds CsrA and prevents it from repressing translation of its target genes, one of which is flagellin. Binds to flagellin and participates in the assembly of the flagellum.</text>
</comment>
<comment type="subunit">
    <text evidence="1">Interacts with translational regulator CsrA and flagellin(s).</text>
</comment>
<comment type="subcellular location">
    <subcellularLocation>
        <location evidence="1">Cytoplasm</location>
    </subcellularLocation>
</comment>
<comment type="similarity">
    <text evidence="1">Belongs to the FliW family.</text>
</comment>
<comment type="sequence caution" evidence="2">
    <conflict type="erroneous initiation">
        <sequence resource="EMBL-CDS" id="AAO36255"/>
    </conflict>
    <text>Extended N-terminus.</text>
</comment>
<sequence length="145" mass="17077">MKLNTKHHGTIDYEEKDIINFKRGLPGFEHLKKFIVYSIEENNIFSVLQSLEEENIGIPVLSPFTICSDYEVKLTEEQIKNLKIKSEEEVWVLNTVTINSDYKEITTNLRAPIIINIKERIGEQIILKNEEYKIKYPIFQEENKC</sequence>
<reference key="1">
    <citation type="journal article" date="2003" name="Proc. Natl. Acad. Sci. U.S.A.">
        <title>The genome sequence of Clostridium tetani, the causative agent of tetanus disease.</title>
        <authorList>
            <person name="Brueggemann H."/>
            <person name="Baeumer S."/>
            <person name="Fricke W.F."/>
            <person name="Wiezer A."/>
            <person name="Liesegang H."/>
            <person name="Decker I."/>
            <person name="Herzberg C."/>
            <person name="Martinez-Arias R."/>
            <person name="Merkl R."/>
            <person name="Henne A."/>
            <person name="Gottschalk G."/>
        </authorList>
    </citation>
    <scope>NUCLEOTIDE SEQUENCE [LARGE SCALE GENOMIC DNA]</scope>
    <source>
        <strain>Massachusetts / E88</strain>
    </source>
</reference>